<feature type="chain" id="PRO_1000009981" description="DNA mismatch repair protein MutL">
    <location>
        <begin position="1"/>
        <end position="647"/>
    </location>
</feature>
<comment type="function">
    <text evidence="1">This protein is involved in the repair of mismatches in DNA. It is required for dam-dependent methyl-directed DNA mismatch repair. May act as a 'molecular matchmaker', a protein that promotes the formation of a stable complex between two or more DNA-binding proteins in an ATP-dependent manner without itself being part of a final effector complex.</text>
</comment>
<comment type="similarity">
    <text evidence="1">Belongs to the DNA mismatch repair MutL/HexB family.</text>
</comment>
<dbReference type="EMBL" id="AE017355">
    <property type="protein sequence ID" value="AAT61387.1"/>
    <property type="molecule type" value="Genomic_DNA"/>
</dbReference>
<dbReference type="RefSeq" id="WP_000516481.1">
    <property type="nucleotide sequence ID" value="NC_005957.1"/>
</dbReference>
<dbReference type="RefSeq" id="YP_037829.1">
    <property type="nucleotide sequence ID" value="NC_005957.1"/>
</dbReference>
<dbReference type="SMR" id="Q6HF47"/>
<dbReference type="KEGG" id="btk:BT9727_3509"/>
<dbReference type="PATRIC" id="fig|281309.8.peg.3746"/>
<dbReference type="HOGENOM" id="CLU_004131_4_1_9"/>
<dbReference type="Proteomes" id="UP000001301">
    <property type="component" value="Chromosome"/>
</dbReference>
<dbReference type="GO" id="GO:0032300">
    <property type="term" value="C:mismatch repair complex"/>
    <property type="evidence" value="ECO:0007669"/>
    <property type="project" value="InterPro"/>
</dbReference>
<dbReference type="GO" id="GO:0005524">
    <property type="term" value="F:ATP binding"/>
    <property type="evidence" value="ECO:0007669"/>
    <property type="project" value="InterPro"/>
</dbReference>
<dbReference type="GO" id="GO:0016887">
    <property type="term" value="F:ATP hydrolysis activity"/>
    <property type="evidence" value="ECO:0007669"/>
    <property type="project" value="InterPro"/>
</dbReference>
<dbReference type="GO" id="GO:0140664">
    <property type="term" value="F:ATP-dependent DNA damage sensor activity"/>
    <property type="evidence" value="ECO:0007669"/>
    <property type="project" value="InterPro"/>
</dbReference>
<dbReference type="GO" id="GO:0030983">
    <property type="term" value="F:mismatched DNA binding"/>
    <property type="evidence" value="ECO:0007669"/>
    <property type="project" value="InterPro"/>
</dbReference>
<dbReference type="GO" id="GO:0006298">
    <property type="term" value="P:mismatch repair"/>
    <property type="evidence" value="ECO:0007669"/>
    <property type="project" value="UniProtKB-UniRule"/>
</dbReference>
<dbReference type="CDD" id="cd16926">
    <property type="entry name" value="HATPase_MutL-MLH-PMS-like"/>
    <property type="match status" value="1"/>
</dbReference>
<dbReference type="CDD" id="cd00782">
    <property type="entry name" value="MutL_Trans"/>
    <property type="match status" value="1"/>
</dbReference>
<dbReference type="FunFam" id="3.30.1370.100:FF:000004">
    <property type="entry name" value="DNA mismatch repair endonuclease MutL"/>
    <property type="match status" value="1"/>
</dbReference>
<dbReference type="FunFam" id="3.30.230.10:FF:000036">
    <property type="entry name" value="DNA mismatch repair endonuclease MutL"/>
    <property type="match status" value="1"/>
</dbReference>
<dbReference type="FunFam" id="3.30.565.10:FF:000003">
    <property type="entry name" value="DNA mismatch repair endonuclease MutL"/>
    <property type="match status" value="1"/>
</dbReference>
<dbReference type="Gene3D" id="3.30.230.10">
    <property type="match status" value="1"/>
</dbReference>
<dbReference type="Gene3D" id="3.30.565.10">
    <property type="entry name" value="Histidine kinase-like ATPase, C-terminal domain"/>
    <property type="match status" value="1"/>
</dbReference>
<dbReference type="Gene3D" id="3.30.1540.20">
    <property type="entry name" value="MutL, C-terminal domain, dimerisation subdomain"/>
    <property type="match status" value="1"/>
</dbReference>
<dbReference type="Gene3D" id="3.30.1370.100">
    <property type="entry name" value="MutL, C-terminal domain, regulatory subdomain"/>
    <property type="match status" value="1"/>
</dbReference>
<dbReference type="HAMAP" id="MF_00149">
    <property type="entry name" value="DNA_mis_repair"/>
    <property type="match status" value="1"/>
</dbReference>
<dbReference type="InterPro" id="IPR014762">
    <property type="entry name" value="DNA_mismatch_repair_CS"/>
</dbReference>
<dbReference type="InterPro" id="IPR020667">
    <property type="entry name" value="DNA_mismatch_repair_MutL"/>
</dbReference>
<dbReference type="InterPro" id="IPR013507">
    <property type="entry name" value="DNA_mismatch_S5_2-like"/>
</dbReference>
<dbReference type="InterPro" id="IPR036890">
    <property type="entry name" value="HATPase_C_sf"/>
</dbReference>
<dbReference type="InterPro" id="IPR002099">
    <property type="entry name" value="MutL/Mlh/PMS"/>
</dbReference>
<dbReference type="InterPro" id="IPR038973">
    <property type="entry name" value="MutL/Mlh/Pms-like"/>
</dbReference>
<dbReference type="InterPro" id="IPR014790">
    <property type="entry name" value="MutL_C"/>
</dbReference>
<dbReference type="InterPro" id="IPR042120">
    <property type="entry name" value="MutL_C_dimsub"/>
</dbReference>
<dbReference type="InterPro" id="IPR042121">
    <property type="entry name" value="MutL_C_regsub"/>
</dbReference>
<dbReference type="InterPro" id="IPR037198">
    <property type="entry name" value="MutL_C_sf"/>
</dbReference>
<dbReference type="InterPro" id="IPR020568">
    <property type="entry name" value="Ribosomal_Su5_D2-typ_SF"/>
</dbReference>
<dbReference type="InterPro" id="IPR014721">
    <property type="entry name" value="Ribsml_uS5_D2-typ_fold_subgr"/>
</dbReference>
<dbReference type="NCBIfam" id="TIGR00585">
    <property type="entry name" value="mutl"/>
    <property type="match status" value="1"/>
</dbReference>
<dbReference type="NCBIfam" id="NF000950">
    <property type="entry name" value="PRK00095.1-3"/>
    <property type="match status" value="1"/>
</dbReference>
<dbReference type="PANTHER" id="PTHR10073">
    <property type="entry name" value="DNA MISMATCH REPAIR PROTEIN MLH, PMS, MUTL"/>
    <property type="match status" value="1"/>
</dbReference>
<dbReference type="PANTHER" id="PTHR10073:SF12">
    <property type="entry name" value="DNA MISMATCH REPAIR PROTEIN MLH1"/>
    <property type="match status" value="1"/>
</dbReference>
<dbReference type="Pfam" id="PF01119">
    <property type="entry name" value="DNA_mis_repair"/>
    <property type="match status" value="1"/>
</dbReference>
<dbReference type="Pfam" id="PF13589">
    <property type="entry name" value="HATPase_c_3"/>
    <property type="match status" value="1"/>
</dbReference>
<dbReference type="Pfam" id="PF08676">
    <property type="entry name" value="MutL_C"/>
    <property type="match status" value="1"/>
</dbReference>
<dbReference type="SMART" id="SM01340">
    <property type="entry name" value="DNA_mis_repair"/>
    <property type="match status" value="1"/>
</dbReference>
<dbReference type="SMART" id="SM00853">
    <property type="entry name" value="MutL_C"/>
    <property type="match status" value="1"/>
</dbReference>
<dbReference type="SUPFAM" id="SSF55874">
    <property type="entry name" value="ATPase domain of HSP90 chaperone/DNA topoisomerase II/histidine kinase"/>
    <property type="match status" value="1"/>
</dbReference>
<dbReference type="SUPFAM" id="SSF118116">
    <property type="entry name" value="DNA mismatch repair protein MutL"/>
    <property type="match status" value="1"/>
</dbReference>
<dbReference type="SUPFAM" id="SSF54211">
    <property type="entry name" value="Ribosomal protein S5 domain 2-like"/>
    <property type="match status" value="1"/>
</dbReference>
<dbReference type="PROSITE" id="PS00058">
    <property type="entry name" value="DNA_MISMATCH_REPAIR_1"/>
    <property type="match status" value="1"/>
</dbReference>
<reference key="1">
    <citation type="journal article" date="2006" name="J. Bacteriol.">
        <title>Pathogenomic sequence analysis of Bacillus cereus and Bacillus thuringiensis isolates closely related to Bacillus anthracis.</title>
        <authorList>
            <person name="Han C.S."/>
            <person name="Xie G."/>
            <person name="Challacombe J.F."/>
            <person name="Altherr M.R."/>
            <person name="Bhotika S.S."/>
            <person name="Bruce D."/>
            <person name="Campbell C.S."/>
            <person name="Campbell M.L."/>
            <person name="Chen J."/>
            <person name="Chertkov O."/>
            <person name="Cleland C."/>
            <person name="Dimitrijevic M."/>
            <person name="Doggett N.A."/>
            <person name="Fawcett J.J."/>
            <person name="Glavina T."/>
            <person name="Goodwin L.A."/>
            <person name="Hill K.K."/>
            <person name="Hitchcock P."/>
            <person name="Jackson P.J."/>
            <person name="Keim P."/>
            <person name="Kewalramani A.R."/>
            <person name="Longmire J."/>
            <person name="Lucas S."/>
            <person name="Malfatti S."/>
            <person name="McMurry K."/>
            <person name="Meincke L.J."/>
            <person name="Misra M."/>
            <person name="Moseman B.L."/>
            <person name="Mundt M."/>
            <person name="Munk A.C."/>
            <person name="Okinaka R.T."/>
            <person name="Parson-Quintana B."/>
            <person name="Reilly L.P."/>
            <person name="Richardson P."/>
            <person name="Robinson D.L."/>
            <person name="Rubin E."/>
            <person name="Saunders E."/>
            <person name="Tapia R."/>
            <person name="Tesmer J.G."/>
            <person name="Thayer N."/>
            <person name="Thompson L.S."/>
            <person name="Tice H."/>
            <person name="Ticknor L.O."/>
            <person name="Wills P.L."/>
            <person name="Brettin T.S."/>
            <person name="Gilna P."/>
        </authorList>
    </citation>
    <scope>NUCLEOTIDE SEQUENCE [LARGE SCALE GENOMIC DNA]</scope>
    <source>
        <strain>97-27</strain>
    </source>
</reference>
<keyword id="KW-0227">DNA damage</keyword>
<keyword id="KW-0234">DNA repair</keyword>
<accession>Q6HF47</accession>
<name>MUTL_BACHK</name>
<sequence>MGKIRKLDDQLSNLIAAGEVVERPASVVKELVENSIDANSTSIEIHLEEAGLSKIRIIDNGDGIAEEDCIVAFERHATSKIKDENDLFRIRTLGFRGEALPSIASVSELELITSTGDAPGTHLIIKGGDIIKQEKTASRKGTDITVQNLFFNTPARLKYMKTIHTELGNITDIVYRIAMSHPEVSLKLFHNEKKLLHTSGNGDVRQVLASIYSIQVAKKLVPIEAESLDFTIKGYVTLPEVTRASRNYMSTIVNGRYVRNFVLMKAIQQGYHTLLPVGRYPIGFLSIEMDPMLVDVNVHPAKLEVRFSKEQELLKLIEETLQTAFKKIQLIPDAGVTTKKKEKDESVQEQFQFEHAKPKEPSMPDIILPMGMDEKQEEPLAVKQPAQLWQPPKQEWQPPQSLVREEQSWQPSTKPIMEEPIREEKSWDSNEEDFELEELEEEVREIEEIEMNGNDLPPLYPIGQMHGTYIFAQNDKGLYMIDQHAAQERINYEYFRDKVGRVAQEVQELLVPYRIDLSLTEFLRVEEQLEELKKVGLFLEQFGHQSFIVRSHPTWFPKGQETEIIDEMMEQVVKLKKVDIKKLREEAAIMMSCKASIKANQYLTNDQIFALLEELRTTTNPYTCPHGRPILVHHSTYELEKMFKRVM</sequence>
<gene>
    <name evidence="1" type="primary">mutL</name>
    <name type="ordered locus">BT9727_3509</name>
</gene>
<organism>
    <name type="scientific">Bacillus thuringiensis subsp. konkukian (strain 97-27)</name>
    <dbReference type="NCBI Taxonomy" id="281309"/>
    <lineage>
        <taxon>Bacteria</taxon>
        <taxon>Bacillati</taxon>
        <taxon>Bacillota</taxon>
        <taxon>Bacilli</taxon>
        <taxon>Bacillales</taxon>
        <taxon>Bacillaceae</taxon>
        <taxon>Bacillus</taxon>
        <taxon>Bacillus cereus group</taxon>
    </lineage>
</organism>
<evidence type="ECO:0000255" key="1">
    <source>
        <dbReference type="HAMAP-Rule" id="MF_00149"/>
    </source>
</evidence>
<protein>
    <recommendedName>
        <fullName evidence="1">DNA mismatch repair protein MutL</fullName>
    </recommendedName>
</protein>
<proteinExistence type="inferred from homology"/>